<dbReference type="EMBL" id="AE017351">
    <property type="protein sequence ID" value="AAW46316.1"/>
    <property type="molecule type" value="Genomic_DNA"/>
</dbReference>
<dbReference type="RefSeq" id="XP_567833.1">
    <property type="nucleotide sequence ID" value="XM_567833.1"/>
</dbReference>
<dbReference type="SMR" id="P0CO94"/>
<dbReference type="FunCoup" id="P0CO94">
    <property type="interactions" value="673"/>
</dbReference>
<dbReference type="STRING" id="214684.P0CO94"/>
<dbReference type="PaxDb" id="214684-P0CO94"/>
<dbReference type="EnsemblFungi" id="AAW46316">
    <property type="protein sequence ID" value="AAW46316"/>
    <property type="gene ID" value="CNK01590"/>
</dbReference>
<dbReference type="GeneID" id="3254565"/>
<dbReference type="KEGG" id="cne:CNK01590"/>
<dbReference type="VEuPathDB" id="FungiDB:CNK01590"/>
<dbReference type="eggNOG" id="KOG0050">
    <property type="taxonomic scope" value="Eukaryota"/>
</dbReference>
<dbReference type="HOGENOM" id="CLU_009082_0_0_1"/>
<dbReference type="InParanoid" id="P0CO94"/>
<dbReference type="OMA" id="KMGMAGE"/>
<dbReference type="OrthoDB" id="1410009at2759"/>
<dbReference type="Proteomes" id="UP000002149">
    <property type="component" value="Chromosome 11"/>
</dbReference>
<dbReference type="GO" id="GO:0005829">
    <property type="term" value="C:cytosol"/>
    <property type="evidence" value="ECO:0007669"/>
    <property type="project" value="EnsemblFungi"/>
</dbReference>
<dbReference type="GO" id="GO:0140602">
    <property type="term" value="C:nucleolar peripheral inclusion body"/>
    <property type="evidence" value="ECO:0007669"/>
    <property type="project" value="EnsemblFungi"/>
</dbReference>
<dbReference type="GO" id="GO:0071014">
    <property type="term" value="C:post-mRNA release spliceosomal complex"/>
    <property type="evidence" value="ECO:0007669"/>
    <property type="project" value="EnsemblFungi"/>
</dbReference>
<dbReference type="GO" id="GO:0000974">
    <property type="term" value="C:Prp19 complex"/>
    <property type="evidence" value="ECO:0000318"/>
    <property type="project" value="GO_Central"/>
</dbReference>
<dbReference type="GO" id="GO:0005681">
    <property type="term" value="C:spliceosomal complex"/>
    <property type="evidence" value="ECO:0000318"/>
    <property type="project" value="GO_Central"/>
</dbReference>
<dbReference type="GO" id="GO:0003677">
    <property type="term" value="F:DNA binding"/>
    <property type="evidence" value="ECO:0007669"/>
    <property type="project" value="UniProtKB-KW"/>
</dbReference>
<dbReference type="GO" id="GO:0045292">
    <property type="term" value="P:mRNA cis splicing, via spliceosome"/>
    <property type="evidence" value="ECO:0007669"/>
    <property type="project" value="EnsemblFungi"/>
</dbReference>
<dbReference type="GO" id="GO:0000398">
    <property type="term" value="P:mRNA splicing, via spliceosome"/>
    <property type="evidence" value="ECO:0000318"/>
    <property type="project" value="GO_Central"/>
</dbReference>
<dbReference type="CDD" id="cd00167">
    <property type="entry name" value="SANT"/>
    <property type="match status" value="1"/>
</dbReference>
<dbReference type="CDD" id="cd11659">
    <property type="entry name" value="SANT_CDC5_II"/>
    <property type="match status" value="1"/>
</dbReference>
<dbReference type="FunFam" id="1.10.10.60:FF:000021">
    <property type="entry name" value="CDC5 cell division cycle 5-like"/>
    <property type="match status" value="1"/>
</dbReference>
<dbReference type="Gene3D" id="1.10.10.60">
    <property type="entry name" value="Homeodomain-like"/>
    <property type="match status" value="2"/>
</dbReference>
<dbReference type="InterPro" id="IPR047242">
    <property type="entry name" value="CDC5L/Cef1"/>
</dbReference>
<dbReference type="InterPro" id="IPR021786">
    <property type="entry name" value="Cdc5p/Cef1_C"/>
</dbReference>
<dbReference type="InterPro" id="IPR009057">
    <property type="entry name" value="Homeodomain-like_sf"/>
</dbReference>
<dbReference type="InterPro" id="IPR017930">
    <property type="entry name" value="Myb_dom"/>
</dbReference>
<dbReference type="InterPro" id="IPR001005">
    <property type="entry name" value="SANT/Myb"/>
</dbReference>
<dbReference type="InterPro" id="IPR047240">
    <property type="entry name" value="SANT_CDC5L_II"/>
</dbReference>
<dbReference type="PANTHER" id="PTHR45885">
    <property type="entry name" value="CELL DIVISION CYCLE 5-LIKE PROTEIN"/>
    <property type="match status" value="1"/>
</dbReference>
<dbReference type="PANTHER" id="PTHR45885:SF1">
    <property type="entry name" value="CELL DIVISION CYCLE 5-LIKE PROTEIN"/>
    <property type="match status" value="1"/>
</dbReference>
<dbReference type="Pfam" id="PF11831">
    <property type="entry name" value="Myb_Cef"/>
    <property type="match status" value="1"/>
</dbReference>
<dbReference type="Pfam" id="PF13921">
    <property type="entry name" value="Myb_DNA-bind_6"/>
    <property type="match status" value="1"/>
</dbReference>
<dbReference type="SMART" id="SM00717">
    <property type="entry name" value="SANT"/>
    <property type="match status" value="2"/>
</dbReference>
<dbReference type="SUPFAM" id="SSF46689">
    <property type="entry name" value="Homeodomain-like"/>
    <property type="match status" value="2"/>
</dbReference>
<dbReference type="PROSITE" id="PS51294">
    <property type="entry name" value="HTH_MYB"/>
    <property type="match status" value="2"/>
</dbReference>
<name>CEF1_CRYNJ</name>
<accession>P0CO94</accession>
<accession>Q55JY9</accession>
<accession>Q5K9L1</accession>
<organism>
    <name type="scientific">Cryptococcus neoformans var. neoformans serotype D (strain JEC21 / ATCC MYA-565)</name>
    <name type="common">Filobasidiella neoformans</name>
    <dbReference type="NCBI Taxonomy" id="214684"/>
    <lineage>
        <taxon>Eukaryota</taxon>
        <taxon>Fungi</taxon>
        <taxon>Dikarya</taxon>
        <taxon>Basidiomycota</taxon>
        <taxon>Agaricomycotina</taxon>
        <taxon>Tremellomycetes</taxon>
        <taxon>Tremellales</taxon>
        <taxon>Cryptococcaceae</taxon>
        <taxon>Cryptococcus</taxon>
        <taxon>Cryptococcus neoformans species complex</taxon>
    </lineage>
</organism>
<proteinExistence type="inferred from homology"/>
<gene>
    <name type="primary">CEF1</name>
    <name type="ordered locus">CNK01590</name>
</gene>
<keyword id="KW-0175">Coiled coil</keyword>
<keyword id="KW-0963">Cytoplasm</keyword>
<keyword id="KW-0238">DNA-binding</keyword>
<keyword id="KW-0507">mRNA processing</keyword>
<keyword id="KW-0508">mRNA splicing</keyword>
<keyword id="KW-0539">Nucleus</keyword>
<keyword id="KW-1185">Reference proteome</keyword>
<keyword id="KW-0677">Repeat</keyword>
<keyword id="KW-0747">Spliceosome</keyword>
<feature type="chain" id="PRO_0000197098" description="Pre-mRNA-splicing factor CEF1">
    <location>
        <begin position="1"/>
        <end position="838"/>
    </location>
</feature>
<feature type="domain" description="HTH myb-type 1" evidence="3">
    <location>
        <begin position="2"/>
        <end position="57"/>
    </location>
</feature>
<feature type="domain" description="HTH myb-type 2" evidence="3">
    <location>
        <begin position="58"/>
        <end position="107"/>
    </location>
</feature>
<feature type="DNA-binding region" description="H-T-H motif" evidence="3">
    <location>
        <begin position="30"/>
        <end position="53"/>
    </location>
</feature>
<feature type="DNA-binding region" description="H-T-H motif" evidence="3">
    <location>
        <begin position="81"/>
        <end position="103"/>
    </location>
</feature>
<feature type="region of interest" description="Disordered" evidence="4">
    <location>
        <begin position="114"/>
        <end position="155"/>
    </location>
</feature>
<feature type="region of interest" description="Disordered" evidence="4">
    <location>
        <begin position="253"/>
        <end position="285"/>
    </location>
</feature>
<feature type="region of interest" description="Disordered" evidence="4">
    <location>
        <begin position="433"/>
        <end position="452"/>
    </location>
</feature>
<feature type="region of interest" description="Disordered" evidence="4">
    <location>
        <begin position="490"/>
        <end position="539"/>
    </location>
</feature>
<feature type="coiled-coil region" evidence="2">
    <location>
        <begin position="250"/>
        <end position="311"/>
    </location>
</feature>
<feature type="coiled-coil region" evidence="2">
    <location>
        <begin position="727"/>
        <end position="813"/>
    </location>
</feature>
<feature type="compositionally biased region" description="Basic and acidic residues" evidence="4">
    <location>
        <begin position="131"/>
        <end position="151"/>
    </location>
</feature>
<feature type="compositionally biased region" description="Basic and acidic residues" evidence="4">
    <location>
        <begin position="255"/>
        <end position="278"/>
    </location>
</feature>
<feature type="compositionally biased region" description="Acidic residues" evidence="4">
    <location>
        <begin position="498"/>
        <end position="519"/>
    </location>
</feature>
<feature type="compositionally biased region" description="Basic and acidic residues" evidence="4">
    <location>
        <begin position="520"/>
        <end position="539"/>
    </location>
</feature>
<protein>
    <recommendedName>
        <fullName>Pre-mRNA-splicing factor CEF1</fullName>
    </recommendedName>
</protein>
<evidence type="ECO:0000250" key="1"/>
<evidence type="ECO:0000255" key="2"/>
<evidence type="ECO:0000255" key="3">
    <source>
        <dbReference type="PROSITE-ProRule" id="PRU00625"/>
    </source>
</evidence>
<evidence type="ECO:0000256" key="4">
    <source>
        <dbReference type="SAM" id="MobiDB-lite"/>
    </source>
</evidence>
<evidence type="ECO:0000305" key="5"/>
<reference key="1">
    <citation type="journal article" date="2005" name="Science">
        <title>The genome of the basidiomycetous yeast and human pathogen Cryptococcus neoformans.</title>
        <authorList>
            <person name="Loftus B.J."/>
            <person name="Fung E."/>
            <person name="Roncaglia P."/>
            <person name="Rowley D."/>
            <person name="Amedeo P."/>
            <person name="Bruno D."/>
            <person name="Vamathevan J."/>
            <person name="Miranda M."/>
            <person name="Anderson I.J."/>
            <person name="Fraser J.A."/>
            <person name="Allen J.E."/>
            <person name="Bosdet I.E."/>
            <person name="Brent M.R."/>
            <person name="Chiu R."/>
            <person name="Doering T.L."/>
            <person name="Donlin M.J."/>
            <person name="D'Souza C.A."/>
            <person name="Fox D.S."/>
            <person name="Grinberg V."/>
            <person name="Fu J."/>
            <person name="Fukushima M."/>
            <person name="Haas B.J."/>
            <person name="Huang J.C."/>
            <person name="Janbon G."/>
            <person name="Jones S.J.M."/>
            <person name="Koo H.L."/>
            <person name="Krzywinski M.I."/>
            <person name="Kwon-Chung K.J."/>
            <person name="Lengeler K.B."/>
            <person name="Maiti R."/>
            <person name="Marra M.A."/>
            <person name="Marra R.E."/>
            <person name="Mathewson C.A."/>
            <person name="Mitchell T.G."/>
            <person name="Pertea M."/>
            <person name="Riggs F.R."/>
            <person name="Salzberg S.L."/>
            <person name="Schein J.E."/>
            <person name="Shvartsbeyn A."/>
            <person name="Shin H."/>
            <person name="Shumway M."/>
            <person name="Specht C.A."/>
            <person name="Suh B.B."/>
            <person name="Tenney A."/>
            <person name="Utterback T.R."/>
            <person name="Wickes B.L."/>
            <person name="Wortman J.R."/>
            <person name="Wye N.H."/>
            <person name="Kronstad J.W."/>
            <person name="Lodge J.K."/>
            <person name="Heitman J."/>
            <person name="Davis R.W."/>
            <person name="Fraser C.M."/>
            <person name="Hyman R.W."/>
        </authorList>
    </citation>
    <scope>NUCLEOTIDE SEQUENCE [LARGE SCALE GENOMIC DNA]</scope>
    <source>
        <strain>JEC21 / ATCC MYA-565</strain>
    </source>
</reference>
<sequence length="838" mass="93254">MRVIVKGGVWRNTEDEILKAAISKYGKNQWARISSLLVRKTPKQCKARWYEWLDPSIKKVEWSKTEDEKLLHLAKLMPTQWRTIAPIVGRTATQCLERYQKLLDDAEARDNEELGLGAGEDESSKPATDARGLRPGEIDTDPETRPARPDPIDMDDDEKEMLSEARARLANTQGKKAKRKARERQLEEARRLAFLQKKRELKAAGINLRAKPKKKGMDYNADIPFEKQPAPGFYDVTEEQAKVHAAPVGSTLRALEGKRKQELDEIEERKKRQKKGDGKSNQTQQFVAAREAQIKKLKEQEQIIRRRKLNLPIPQVGERELEDIVKIGQAGELARELVGDGNKATEGLLGEYEALGQAKMARTPRTAPQQDNVMAEARNLRNMMAAQTPLLGEENTPLHGPSVGTGFEGATPRHDVAATPNPLATSARGGVLTSTRTVPGVGTTPLRTPFRDDLNINDDASVYGETPMNDRRRLAESRRALKAGFAALPKPENNFELAETEEDEEEAEEAEPLTEEDAAERDARLKAAREEEERRELERRSTVIKKGLPRPVNVNTYKLLDDLNSAIVEQTDEEMAAAFKLVNLEVAMLMKHDSIAHPLPGTSTPGGLASEYDMPEDDFVAEAKNAIHTELANALGLPGASDEHLRLAIGAAAEENEAAFAEAWAEEREGLVYSPSTRTWVDKTSLSPEELSACYAAMINASRDRVIAEATKAAKAEKKLGKQLGGYQTLNEKAKKAIVDVMEEIHQTKRDMETFLMLKGIEEAAAPARLEKIREEVAVLKKRERDLQARYAELNDRRRENLAAIEQLEEDKIVLAAQVALEAQEGEVADGDVDMNGA</sequence>
<comment type="function">
    <text evidence="1">Involved in pre-mRNA splicing and cell cycle control.</text>
</comment>
<comment type="subunit">
    <text evidence="1">Associated with the spliceosome.</text>
</comment>
<comment type="subcellular location">
    <subcellularLocation>
        <location evidence="1">Cytoplasm</location>
    </subcellularLocation>
    <subcellularLocation>
        <location evidence="3">Nucleus</location>
    </subcellularLocation>
</comment>
<comment type="similarity">
    <text evidence="5">Belongs to the CEF1 family.</text>
</comment>